<evidence type="ECO:0000250" key="1"/>
<evidence type="ECO:0000250" key="2">
    <source>
        <dbReference type="UniProtKB" id="Q9Y4F3"/>
    </source>
</evidence>
<evidence type="ECO:0000255" key="3">
    <source>
        <dbReference type="PROSITE-ProRule" id="PRU00176"/>
    </source>
</evidence>
<evidence type="ECO:0000255" key="4">
    <source>
        <dbReference type="PROSITE-ProRule" id="PRU00975"/>
    </source>
</evidence>
<evidence type="ECO:0000256" key="5">
    <source>
        <dbReference type="SAM" id="MobiDB-lite"/>
    </source>
</evidence>
<sequence>MEGNRTENLCNRSFGWLQRQENDVKPWLWKLSNCFSAAEKTLPCSAKTKDYMENQKGVVESKDASSHNAGSKLFPAVPLPDVHPLQQQQIQLSPGPKVSCCAHGSDSCTPQMHCGVGDGSVIHPGTILDSKSTGTITCQVGSGFAFPSASSLKNPPPRSNLAGIASEFPGMCIENSVSSYQHLPCCGKLHFQSCHGNVHKLHQFPALQSCTPSGYFPCSEFTSGATGRLDEHIAQSELTSHVCASPLHLSVAPSVCLKGSHYCSDCLNKPTRNSLVDAAKIWPNIPPPNTQTGPVSIPICNGCGTQGTGNEKSLLLASSLGKSPQKYGSPEVAVAGQVLENLPPIGVFWDIENCSVPTGRSAVAVVQRIREKFFKGHREAEFICVCDISKENKEVIQELNNCQVTVAHINATAKNAADDKLRQSLRRFADTHTAPATVVLVSTDVNFALELSDLRHRHGFRIILVHKNQASEALLHHAHELVCFEEFISDLPPRLPLKMPACHTLLYVYNLPTNRDSKSVSNRLRRLSDNCGGKVLSISGSSAILRFLNQESAERAWKRMENEDVFGNRIVVSFAPKNKELNETKSSNFVGTEKVKSPKKVNRSTKLCITNKDGSDQSSGTKGSAGRGLQSHGSVIKPTNVKSLQELCRLESKTISRNTENHQEHLREIPSQNNSHAAAPVSLTTKKSGVGESSCKSSYKKETSVSRSMTNSPVDKKDKDEAVFQVSYPSAFSKLTASRQLSPLFVSQNCWSSRSMSPNLSNRSSPLTFNVVNHTSGTDCPDPFANGADIQISNIDYRLSRKELQQTLQETFSRHGKVKCVELSPHTDYQLKATVQMENLQEAISAVNSLHRYKIGSKRIQVSLATGAANKSLSLLSSETVSILQDAPACCLPMFKFTEIYEKKFGRKLMVSDLYKLTDTVAIRDQGGGRLVCLLPSSQARQSPLGSSQSHDGSSANCSPIIFEELEYHEPVCKQHCLNKDVIEHEFDPDSYRIPFAILSLKTFAPQVHSLLQTHEGTVPLLSFPDCYMSEFNDLEMVPEGQGGVPLEHLITCVPGVNIATAQNGIKVIKWIHNKPPPPTTVDPWLLRSKSPVGNPQLIQFSREVIDLLKSQPSCIIPVSKFIPTYHHHFAKQCRVSDYGYSKLMELLEAVPHVLQILGMGSKRLLTLTHRAQVKRFTQDLLKLLKSQASKQVIVKEFLQAYHWCFSKDWDVTEYGVCELADIISEIPDTTICLSQQDNEMVICIPKRERTQEEIERTKQFSKEVVDLLRHQPHFRMPFSKFIPSYHHHFGRQCKLAYYGFTKLLELFEAIPEVLQVLECGEEKILTLTEVEQVKAVAAQFVKLLRSQKDNCLMMSDLLSEYSKTFGYTLRLHDYDVSSVPALMQKLCHVVKVVDTESGKQIQLINRKSLRTLTAQLLVLLMSWDGASFLSVEQLKQHYETIHSTSLNPCEYGFMTLTELLKSLPYLVEVFTNGAEEEYVRLTNLYMFAKNVRSLLHTYHYQQIFLHEFLVAYSKYTGEVLQPKAYGCNNLEELLGAIPQVVWIKGHGHKRIVVLKNDMKTRFSSPSFPLADHVDDHGNQLDDHNGHIMETPGSTSSMELSLGTPSNAPNQTEQELLCLTNTSPVDLLCEPVPSCLPSPQLRPDPVVLESADLIQFEERPVPLSEMMILTEEEKQKIVTTAQEKLTSGSVASSTAENTSVPPRHSSETQLNKEAMDSPAKKQHKNKVKLAANFSLAPVTKL</sequence>
<gene>
    <name evidence="2" type="primary">MARF1</name>
    <name type="synonym">LKAP</name>
</gene>
<name>MARF1_CHICK</name>
<reference key="1">
    <citation type="journal article" date="2004" name="Nature">
        <title>Sequence and comparative analysis of the chicken genome provide unique perspectives on vertebrate evolution.</title>
        <authorList>
            <person name="Hillier L.W."/>
            <person name="Miller W."/>
            <person name="Birney E."/>
            <person name="Warren W."/>
            <person name="Hardison R.C."/>
            <person name="Ponting C.P."/>
            <person name="Bork P."/>
            <person name="Burt D.W."/>
            <person name="Groenen M.A.M."/>
            <person name="Delany M.E."/>
            <person name="Dodgson J.B."/>
            <person name="Chinwalla A.T."/>
            <person name="Cliften P.F."/>
            <person name="Clifton S.W."/>
            <person name="Delehaunty K.D."/>
            <person name="Fronick C."/>
            <person name="Fulton R.S."/>
            <person name="Graves T.A."/>
            <person name="Kremitzki C."/>
            <person name="Layman D."/>
            <person name="Magrini V."/>
            <person name="McPherson J.D."/>
            <person name="Miner T.L."/>
            <person name="Minx P."/>
            <person name="Nash W.E."/>
            <person name="Nhan M.N."/>
            <person name="Nelson J.O."/>
            <person name="Oddy L.G."/>
            <person name="Pohl C.S."/>
            <person name="Randall-Maher J."/>
            <person name="Smith S.M."/>
            <person name="Wallis J.W."/>
            <person name="Yang S.-P."/>
            <person name="Romanov M.N."/>
            <person name="Rondelli C.M."/>
            <person name="Paton B."/>
            <person name="Smith J."/>
            <person name="Morrice D."/>
            <person name="Daniels L."/>
            <person name="Tempest H.G."/>
            <person name="Robertson L."/>
            <person name="Masabanda J.S."/>
            <person name="Griffin D.K."/>
            <person name="Vignal A."/>
            <person name="Fillon V."/>
            <person name="Jacobbson L."/>
            <person name="Kerje S."/>
            <person name="Andersson L."/>
            <person name="Crooijmans R.P."/>
            <person name="Aerts J."/>
            <person name="van der Poel J.J."/>
            <person name="Ellegren H."/>
            <person name="Caldwell R.B."/>
            <person name="Hubbard S.J."/>
            <person name="Grafham D.V."/>
            <person name="Kierzek A.M."/>
            <person name="McLaren S.R."/>
            <person name="Overton I.M."/>
            <person name="Arakawa H."/>
            <person name="Beattie K.J."/>
            <person name="Bezzubov Y."/>
            <person name="Boardman P.E."/>
            <person name="Bonfield J.K."/>
            <person name="Croning M.D.R."/>
            <person name="Davies R.M."/>
            <person name="Francis M.D."/>
            <person name="Humphray S.J."/>
            <person name="Scott C.E."/>
            <person name="Taylor R.G."/>
            <person name="Tickle C."/>
            <person name="Brown W.R.A."/>
            <person name="Rogers J."/>
            <person name="Buerstedde J.-M."/>
            <person name="Wilson S.A."/>
            <person name="Stubbs L."/>
            <person name="Ovcharenko I."/>
            <person name="Gordon L."/>
            <person name="Lucas S."/>
            <person name="Miller M.M."/>
            <person name="Inoko H."/>
            <person name="Shiina T."/>
            <person name="Kaufman J."/>
            <person name="Salomonsen J."/>
            <person name="Skjoedt K."/>
            <person name="Wong G.K.-S."/>
            <person name="Wang J."/>
            <person name="Liu B."/>
            <person name="Wang J."/>
            <person name="Yu J."/>
            <person name="Yang H."/>
            <person name="Nefedov M."/>
            <person name="Koriabine M."/>
            <person name="Dejong P.J."/>
            <person name="Goodstadt L."/>
            <person name="Webber C."/>
            <person name="Dickens N.J."/>
            <person name="Letunic I."/>
            <person name="Suyama M."/>
            <person name="Torrents D."/>
            <person name="von Mering C."/>
            <person name="Zdobnov E.M."/>
            <person name="Makova K."/>
            <person name="Nekrutenko A."/>
            <person name="Elnitski L."/>
            <person name="Eswara P."/>
            <person name="King D.C."/>
            <person name="Yang S.-P."/>
            <person name="Tyekucheva S."/>
            <person name="Radakrishnan A."/>
            <person name="Harris R.S."/>
            <person name="Chiaromonte F."/>
            <person name="Taylor J."/>
            <person name="He J."/>
            <person name="Rijnkels M."/>
            <person name="Griffiths-Jones S."/>
            <person name="Ureta-Vidal A."/>
            <person name="Hoffman M.M."/>
            <person name="Severin J."/>
            <person name="Searle S.M.J."/>
            <person name="Law A.S."/>
            <person name="Speed D."/>
            <person name="Waddington D."/>
            <person name="Cheng Z."/>
            <person name="Tuzun E."/>
            <person name="Eichler E."/>
            <person name="Bao Z."/>
            <person name="Flicek P."/>
            <person name="Shteynberg D.D."/>
            <person name="Brent M.R."/>
            <person name="Bye J.M."/>
            <person name="Huckle E.J."/>
            <person name="Chatterji S."/>
            <person name="Dewey C."/>
            <person name="Pachter L."/>
            <person name="Kouranov A."/>
            <person name="Mourelatos Z."/>
            <person name="Hatzigeorgiou A.G."/>
            <person name="Paterson A.H."/>
            <person name="Ivarie R."/>
            <person name="Brandstrom M."/>
            <person name="Axelsson E."/>
            <person name="Backstrom N."/>
            <person name="Berlin S."/>
            <person name="Webster M.T."/>
            <person name="Pourquie O."/>
            <person name="Reymond A."/>
            <person name="Ucla C."/>
            <person name="Antonarakis S.E."/>
            <person name="Long M."/>
            <person name="Emerson J.J."/>
            <person name="Betran E."/>
            <person name="Dupanloup I."/>
            <person name="Kaessmann H."/>
            <person name="Hinrichs A.S."/>
            <person name="Bejerano G."/>
            <person name="Furey T.S."/>
            <person name="Harte R.A."/>
            <person name="Raney B."/>
            <person name="Siepel A."/>
            <person name="Kent W.J."/>
            <person name="Haussler D."/>
            <person name="Eyras E."/>
            <person name="Castelo R."/>
            <person name="Abril J.F."/>
            <person name="Castellano S."/>
            <person name="Camara F."/>
            <person name="Parra G."/>
            <person name="Guigo R."/>
            <person name="Bourque G."/>
            <person name="Tesler G."/>
            <person name="Pevzner P.A."/>
            <person name="Smit A."/>
            <person name="Fulton L.A."/>
            <person name="Mardis E.R."/>
            <person name="Wilson R.K."/>
        </authorList>
    </citation>
    <scope>NUCLEOTIDE SEQUENCE [LARGE SCALE GENOMIC DNA]</scope>
    <source>
        <strain>Red jungle fowl</strain>
    </source>
</reference>
<feature type="chain" id="PRO_0000417528" description="Meiosis regulator and mRNA stability factor 1">
    <location>
        <begin position="1"/>
        <end position="1741"/>
    </location>
</feature>
<feature type="domain" description="NYN">
    <location>
        <begin position="345"/>
        <end position="482"/>
    </location>
</feature>
<feature type="domain" description="RRM" evidence="3">
    <location>
        <begin position="788"/>
        <end position="867"/>
    </location>
</feature>
<feature type="domain" description="HTH OST-type 1" evidence="4">
    <location>
        <begin position="872"/>
        <end position="946"/>
    </location>
</feature>
<feature type="domain" description="HTH OST-type 2" evidence="4">
    <location>
        <begin position="1000"/>
        <end position="1076"/>
    </location>
</feature>
<feature type="domain" description="HTH OST-type 3" evidence="4">
    <location>
        <begin position="1097"/>
        <end position="1171"/>
    </location>
</feature>
<feature type="domain" description="HTH OST-type 4" evidence="4">
    <location>
        <begin position="1173"/>
        <end position="1248"/>
    </location>
</feature>
<feature type="domain" description="HTH OST-type 5" evidence="4">
    <location>
        <begin position="1257"/>
        <end position="1332"/>
    </location>
</feature>
<feature type="domain" description="HTH OST-type 6" evidence="4">
    <location>
        <begin position="1333"/>
        <end position="1408"/>
    </location>
</feature>
<feature type="domain" description="HTH OST-type 7" evidence="4">
    <location>
        <begin position="1409"/>
        <end position="1483"/>
    </location>
</feature>
<feature type="domain" description="HTH OST-type 8" evidence="4">
    <location>
        <begin position="1484"/>
        <end position="1558"/>
    </location>
</feature>
<feature type="region of interest" description="Disordered" evidence="5">
    <location>
        <begin position="594"/>
        <end position="636"/>
    </location>
</feature>
<feature type="region of interest" description="Disordered" evidence="5">
    <location>
        <begin position="659"/>
        <end position="678"/>
    </location>
</feature>
<feature type="region of interest" description="Disordered" evidence="5">
    <location>
        <begin position="683"/>
        <end position="716"/>
    </location>
</feature>
<feature type="region of interest" description="Disordered" evidence="5">
    <location>
        <begin position="1684"/>
        <end position="1727"/>
    </location>
</feature>
<feature type="compositionally biased region" description="Basic and acidic residues" evidence="5">
    <location>
        <begin position="659"/>
        <end position="668"/>
    </location>
</feature>
<feature type="compositionally biased region" description="Polar residues" evidence="5">
    <location>
        <begin position="1684"/>
        <end position="1700"/>
    </location>
</feature>
<protein>
    <recommendedName>
        <fullName evidence="2">Meiosis regulator and mRNA stability factor 1</fullName>
    </recommendedName>
    <alternativeName>
        <fullName>Limkain-b1</fullName>
    </alternativeName>
    <alternativeName>
        <fullName>Meiosis arrest female protein 1 homolog</fullName>
    </alternativeName>
</protein>
<proteinExistence type="inferred from homology"/>
<accession>E1BZ85</accession>
<keyword id="KW-0221">Differentiation</keyword>
<keyword id="KW-0469">Meiosis</keyword>
<keyword id="KW-0896">Oogenesis</keyword>
<keyword id="KW-0576">Peroxisome</keyword>
<keyword id="KW-1185">Reference proteome</keyword>
<keyword id="KW-0677">Repeat</keyword>
<keyword id="KW-0694">RNA-binding</keyword>
<dbReference type="EMBL" id="AADN02023593">
    <property type="status" value="NOT_ANNOTATED_CDS"/>
    <property type="molecule type" value="Genomic_DNA"/>
</dbReference>
<dbReference type="EMBL" id="AADN02023594">
    <property type="status" value="NOT_ANNOTATED_CDS"/>
    <property type="molecule type" value="Genomic_DNA"/>
</dbReference>
<dbReference type="EMBL" id="AADN02023595">
    <property type="status" value="NOT_ANNOTATED_CDS"/>
    <property type="molecule type" value="Genomic_DNA"/>
</dbReference>
<dbReference type="SMR" id="E1BZ85"/>
<dbReference type="FunCoup" id="E1BZ85">
    <property type="interactions" value="1355"/>
</dbReference>
<dbReference type="STRING" id="9031.ENSGALP00000043483"/>
<dbReference type="PaxDb" id="9031-ENSGALP00000010450"/>
<dbReference type="VEuPathDB" id="HostDB:geneid_416595"/>
<dbReference type="eggNOG" id="ENOG502QUYZ">
    <property type="taxonomic scope" value="Eukaryota"/>
</dbReference>
<dbReference type="InParanoid" id="E1BZ85"/>
<dbReference type="OrthoDB" id="549353at2759"/>
<dbReference type="PhylomeDB" id="E1BZ85"/>
<dbReference type="TreeFam" id="TF329117"/>
<dbReference type="Proteomes" id="UP000000539">
    <property type="component" value="Unassembled WGS sequence"/>
</dbReference>
<dbReference type="GO" id="GO:0005737">
    <property type="term" value="C:cytoplasm"/>
    <property type="evidence" value="ECO:0000318"/>
    <property type="project" value="GO_Central"/>
</dbReference>
<dbReference type="GO" id="GO:0005777">
    <property type="term" value="C:peroxisome"/>
    <property type="evidence" value="ECO:0007669"/>
    <property type="project" value="UniProtKB-SubCell"/>
</dbReference>
<dbReference type="GO" id="GO:1905762">
    <property type="term" value="F:CCR4-NOT complex binding"/>
    <property type="evidence" value="ECO:0000318"/>
    <property type="project" value="GO_Central"/>
</dbReference>
<dbReference type="GO" id="GO:0003723">
    <property type="term" value="F:RNA binding"/>
    <property type="evidence" value="ECO:0007669"/>
    <property type="project" value="UniProtKB-KW"/>
</dbReference>
<dbReference type="GO" id="GO:0004540">
    <property type="term" value="F:RNA nuclease activity"/>
    <property type="evidence" value="ECO:0007669"/>
    <property type="project" value="InterPro"/>
</dbReference>
<dbReference type="GO" id="GO:0051321">
    <property type="term" value="P:meiotic cell cycle"/>
    <property type="evidence" value="ECO:0007669"/>
    <property type="project" value="UniProtKB-KW"/>
</dbReference>
<dbReference type="GO" id="GO:0048477">
    <property type="term" value="P:oogenesis"/>
    <property type="evidence" value="ECO:0007669"/>
    <property type="project" value="UniProtKB-KW"/>
</dbReference>
<dbReference type="GO" id="GO:0010468">
    <property type="term" value="P:regulation of gene expression"/>
    <property type="evidence" value="ECO:0007669"/>
    <property type="project" value="InterPro"/>
</dbReference>
<dbReference type="CDD" id="cd09977">
    <property type="entry name" value="LOTUS_1_Limkain_b1"/>
    <property type="match status" value="1"/>
</dbReference>
<dbReference type="CDD" id="cd09978">
    <property type="entry name" value="LOTUS_2_Limkain_b1"/>
    <property type="match status" value="1"/>
</dbReference>
<dbReference type="CDD" id="cd09979">
    <property type="entry name" value="LOTUS_3_Limkain_b1"/>
    <property type="match status" value="1"/>
</dbReference>
<dbReference type="CDD" id="cd09980">
    <property type="entry name" value="LOTUS_4_Limkain_b1"/>
    <property type="match status" value="1"/>
</dbReference>
<dbReference type="CDD" id="cd09981">
    <property type="entry name" value="LOTUS_5_Limkain_b1"/>
    <property type="match status" value="1"/>
</dbReference>
<dbReference type="CDD" id="cd09982">
    <property type="entry name" value="LOTUS_6_Limkain_b1"/>
    <property type="match status" value="1"/>
</dbReference>
<dbReference type="CDD" id="cd09983">
    <property type="entry name" value="LOTUS_7_Limkain_b1"/>
    <property type="match status" value="1"/>
</dbReference>
<dbReference type="CDD" id="cd09984">
    <property type="entry name" value="LOTUS_8_Limkain_b1"/>
    <property type="match status" value="1"/>
</dbReference>
<dbReference type="CDD" id="cd10910">
    <property type="entry name" value="PIN_limkain_b1_N_like"/>
    <property type="match status" value="1"/>
</dbReference>
<dbReference type="CDD" id="cd12255">
    <property type="entry name" value="RRM1_LKAP"/>
    <property type="match status" value="1"/>
</dbReference>
<dbReference type="CDD" id="cd12256">
    <property type="entry name" value="RRM2_LKAP"/>
    <property type="match status" value="1"/>
</dbReference>
<dbReference type="FunFam" id="3.30.420.610:FF:000001">
    <property type="entry name" value="Meiosis regulator and mRNA stability factor 1"/>
    <property type="match status" value="2"/>
</dbReference>
<dbReference type="Gene3D" id="3.30.70.330">
    <property type="match status" value="2"/>
</dbReference>
<dbReference type="Gene3D" id="3.40.50.1010">
    <property type="entry name" value="5'-nuclease"/>
    <property type="match status" value="1"/>
</dbReference>
<dbReference type="Gene3D" id="3.30.420.610">
    <property type="entry name" value="LOTUS domain-like"/>
    <property type="match status" value="6"/>
</dbReference>
<dbReference type="InterPro" id="IPR041966">
    <property type="entry name" value="LOTUS-like"/>
</dbReference>
<dbReference type="InterPro" id="IPR024768">
    <property type="entry name" value="Marf1"/>
</dbReference>
<dbReference type="InterPro" id="IPR045602">
    <property type="entry name" value="MARF1_LOTUS"/>
</dbReference>
<dbReference type="InterPro" id="IPR034189">
    <property type="entry name" value="MARF1_RRM1"/>
</dbReference>
<dbReference type="InterPro" id="IPR034191">
    <property type="entry name" value="MARF1_RRM2"/>
</dbReference>
<dbReference type="InterPro" id="IPR012677">
    <property type="entry name" value="Nucleotide-bd_a/b_plait_sf"/>
</dbReference>
<dbReference type="InterPro" id="IPR021139">
    <property type="entry name" value="NYN"/>
</dbReference>
<dbReference type="InterPro" id="IPR025605">
    <property type="entry name" value="OST-HTH/LOTUS_dom"/>
</dbReference>
<dbReference type="InterPro" id="IPR035979">
    <property type="entry name" value="RBD_domain_sf"/>
</dbReference>
<dbReference type="InterPro" id="IPR000504">
    <property type="entry name" value="RRM_dom"/>
</dbReference>
<dbReference type="PANTHER" id="PTHR14379">
    <property type="entry name" value="LIMKAIN B LKAP"/>
    <property type="match status" value="1"/>
</dbReference>
<dbReference type="PANTHER" id="PTHR14379:SF3">
    <property type="entry name" value="MEIOSIS REGULATOR AND MRNA STABILITY FACTOR 1"/>
    <property type="match status" value="1"/>
</dbReference>
<dbReference type="Pfam" id="PF19687">
    <property type="entry name" value="MARF1_LOTUS"/>
    <property type="match status" value="1"/>
</dbReference>
<dbReference type="Pfam" id="PF01936">
    <property type="entry name" value="NYN"/>
    <property type="match status" value="1"/>
</dbReference>
<dbReference type="Pfam" id="PF12872">
    <property type="entry name" value="OST-HTH"/>
    <property type="match status" value="5"/>
</dbReference>
<dbReference type="Pfam" id="PF11608">
    <property type="entry name" value="RRM_MARF1"/>
    <property type="match status" value="1"/>
</dbReference>
<dbReference type="SMART" id="SM00360">
    <property type="entry name" value="RRM"/>
    <property type="match status" value="2"/>
</dbReference>
<dbReference type="SUPFAM" id="SSF54928">
    <property type="entry name" value="RNA-binding domain, RBD"/>
    <property type="match status" value="2"/>
</dbReference>
<dbReference type="PROSITE" id="PS51644">
    <property type="entry name" value="HTH_OST"/>
    <property type="match status" value="8"/>
</dbReference>
<dbReference type="PROSITE" id="PS50102">
    <property type="entry name" value="RRM"/>
    <property type="match status" value="2"/>
</dbReference>
<comment type="function">
    <text evidence="1">Essential regulator of oogenesis required for female meiotic progression to repress transposable elements and preventing their mobilization, which is essential for the germline integrity.</text>
</comment>
<comment type="subcellular location">
    <subcellularLocation>
        <location evidence="1">Peroxisome</location>
    </subcellularLocation>
</comment>
<organism>
    <name type="scientific">Gallus gallus</name>
    <name type="common">Chicken</name>
    <dbReference type="NCBI Taxonomy" id="9031"/>
    <lineage>
        <taxon>Eukaryota</taxon>
        <taxon>Metazoa</taxon>
        <taxon>Chordata</taxon>
        <taxon>Craniata</taxon>
        <taxon>Vertebrata</taxon>
        <taxon>Euteleostomi</taxon>
        <taxon>Archelosauria</taxon>
        <taxon>Archosauria</taxon>
        <taxon>Dinosauria</taxon>
        <taxon>Saurischia</taxon>
        <taxon>Theropoda</taxon>
        <taxon>Coelurosauria</taxon>
        <taxon>Aves</taxon>
        <taxon>Neognathae</taxon>
        <taxon>Galloanserae</taxon>
        <taxon>Galliformes</taxon>
        <taxon>Phasianidae</taxon>
        <taxon>Phasianinae</taxon>
        <taxon>Gallus</taxon>
    </lineage>
</organism>